<evidence type="ECO:0000250" key="1">
    <source>
        <dbReference type="UniProtKB" id="Q91Z96"/>
    </source>
</evidence>
<evidence type="ECO:0000255" key="2">
    <source>
        <dbReference type="PROSITE-ProRule" id="PRU00159"/>
    </source>
</evidence>
<evidence type="ECO:0000255" key="3">
    <source>
        <dbReference type="PROSITE-ProRule" id="PRU10027"/>
    </source>
</evidence>
<evidence type="ECO:0000256" key="4">
    <source>
        <dbReference type="SAM" id="MobiDB-lite"/>
    </source>
</evidence>
<evidence type="ECO:0000269" key="5">
    <source>
    </source>
</evidence>
<evidence type="ECO:0000269" key="6">
    <source>
    </source>
</evidence>
<evidence type="ECO:0000269" key="7">
    <source>
    </source>
</evidence>
<evidence type="ECO:0000269" key="8">
    <source>
    </source>
</evidence>
<evidence type="ECO:0000303" key="9">
    <source>
    </source>
</evidence>
<evidence type="ECO:0000303" key="10">
    <source>
    </source>
</evidence>
<evidence type="ECO:0000303" key="11">
    <source>
    </source>
</evidence>
<evidence type="ECO:0000303" key="12">
    <source ref="5"/>
</evidence>
<evidence type="ECO:0000305" key="13"/>
<evidence type="ECO:0007744" key="14">
    <source>
        <dbReference type="PDB" id="4W9W"/>
    </source>
</evidence>
<evidence type="ECO:0007744" key="15">
    <source>
        <dbReference type="PDB" id="4W9X"/>
    </source>
</evidence>
<evidence type="ECO:0007744" key="16">
    <source>
        <dbReference type="PDB" id="5I3O"/>
    </source>
</evidence>
<evidence type="ECO:0007744" key="17">
    <source>
        <dbReference type="PDB" id="5I3R"/>
    </source>
</evidence>
<evidence type="ECO:0007744" key="18">
    <source>
        <dbReference type="PDB" id="5IKW"/>
    </source>
</evidence>
<evidence type="ECO:0007744" key="19">
    <source>
    </source>
</evidence>
<evidence type="ECO:0007744" key="20">
    <source>
    </source>
</evidence>
<evidence type="ECO:0007744" key="21">
    <source>
    </source>
</evidence>
<evidence type="ECO:0007744" key="22">
    <source>
    </source>
</evidence>
<evidence type="ECO:0007744" key="23">
    <source>
    </source>
</evidence>
<evidence type="ECO:0007744" key="24">
    <source>
    </source>
</evidence>
<evidence type="ECO:0007744" key="25">
    <source>
    </source>
</evidence>
<evidence type="ECO:0007829" key="26">
    <source>
        <dbReference type="PDB" id="4W9W"/>
    </source>
</evidence>
<protein>
    <recommendedName>
        <fullName evidence="1">BMP-2-inducible protein kinase</fullName>
        <shortName evidence="1">BIKe</shortName>
        <ecNumber evidence="7">2.7.11.1</ecNumber>
    </recommendedName>
</protein>
<proteinExistence type="evidence at protein level"/>
<comment type="function">
    <text evidence="1">May be involved in osteoblast differentiation.</text>
</comment>
<comment type="catalytic activity">
    <reaction evidence="7">
        <text>L-seryl-[protein] + ATP = O-phospho-L-seryl-[protein] + ADP + H(+)</text>
        <dbReference type="Rhea" id="RHEA:17989"/>
        <dbReference type="Rhea" id="RHEA-COMP:9863"/>
        <dbReference type="Rhea" id="RHEA-COMP:11604"/>
        <dbReference type="ChEBI" id="CHEBI:15378"/>
        <dbReference type="ChEBI" id="CHEBI:29999"/>
        <dbReference type="ChEBI" id="CHEBI:30616"/>
        <dbReference type="ChEBI" id="CHEBI:83421"/>
        <dbReference type="ChEBI" id="CHEBI:456216"/>
        <dbReference type="EC" id="2.7.11.1"/>
    </reaction>
</comment>
<comment type="catalytic activity">
    <reaction evidence="7">
        <text>L-threonyl-[protein] + ATP = O-phospho-L-threonyl-[protein] + ADP + H(+)</text>
        <dbReference type="Rhea" id="RHEA:46608"/>
        <dbReference type="Rhea" id="RHEA-COMP:11060"/>
        <dbReference type="Rhea" id="RHEA-COMP:11605"/>
        <dbReference type="ChEBI" id="CHEBI:15378"/>
        <dbReference type="ChEBI" id="CHEBI:30013"/>
        <dbReference type="ChEBI" id="CHEBI:30616"/>
        <dbReference type="ChEBI" id="CHEBI:61977"/>
        <dbReference type="ChEBI" id="CHEBI:456216"/>
        <dbReference type="EC" id="2.7.11.1"/>
    </reaction>
</comment>
<comment type="interaction">
    <interactant intactId="EBI-1383367">
        <id>Q9NSY1</id>
    </interactant>
    <interactant intactId="EBI-1171113">
        <id>Q14677</id>
        <label>CLINT1</label>
    </interactant>
    <organismsDiffer>false</organismsDiffer>
    <experiments>7</experiments>
</comment>
<comment type="interaction">
    <interactant intactId="EBI-1383367">
        <id>Q9NSY1</id>
    </interactant>
    <interactant intactId="EBI-396676">
        <id>O95630</id>
        <label>STAMBP</label>
    </interactant>
    <organismsDiffer>false</organismsDiffer>
    <experiments>3</experiments>
</comment>
<comment type="subcellular location">
    <subcellularLocation>
        <location evidence="8">Nucleus</location>
    </subcellularLocation>
</comment>
<comment type="alternative products">
    <event type="alternative splicing"/>
    <isoform>
        <id>Q9NSY1-1</id>
        <name>1</name>
        <sequence type="displayed"/>
    </isoform>
    <isoform>
        <id>Q9NSY1-2</id>
        <name>2</name>
        <sequence type="described" ref="VSP_008091 VSP_008092"/>
    </isoform>
    <isoform>
        <id>Q9NSY1-3</id>
        <name>3</name>
        <sequence type="described" ref="VSP_008093 VSP_008091 VSP_008092"/>
    </isoform>
</comment>
<comment type="PTM">
    <text evidence="1">Autophosphorylated.</text>
</comment>
<comment type="similarity">
    <text evidence="2">Belongs to the protein kinase superfamily. Ser/Thr protein kinase family.</text>
</comment>
<reference key="1">
    <citation type="journal article" date="2004" name="Nat. Genet.">
        <title>Complete sequencing and characterization of 21,243 full-length human cDNAs.</title>
        <authorList>
            <person name="Ota T."/>
            <person name="Suzuki Y."/>
            <person name="Nishikawa T."/>
            <person name="Otsuki T."/>
            <person name="Sugiyama T."/>
            <person name="Irie R."/>
            <person name="Wakamatsu A."/>
            <person name="Hayashi K."/>
            <person name="Sato H."/>
            <person name="Nagai K."/>
            <person name="Kimura K."/>
            <person name="Makita H."/>
            <person name="Sekine M."/>
            <person name="Obayashi M."/>
            <person name="Nishi T."/>
            <person name="Shibahara T."/>
            <person name="Tanaka T."/>
            <person name="Ishii S."/>
            <person name="Yamamoto J."/>
            <person name="Saito K."/>
            <person name="Kawai Y."/>
            <person name="Isono Y."/>
            <person name="Nakamura Y."/>
            <person name="Nagahari K."/>
            <person name="Murakami K."/>
            <person name="Yasuda T."/>
            <person name="Iwayanagi T."/>
            <person name="Wagatsuma M."/>
            <person name="Shiratori A."/>
            <person name="Sudo H."/>
            <person name="Hosoiri T."/>
            <person name="Kaku Y."/>
            <person name="Kodaira H."/>
            <person name="Kondo H."/>
            <person name="Sugawara M."/>
            <person name="Takahashi M."/>
            <person name="Kanda K."/>
            <person name="Yokoi T."/>
            <person name="Furuya T."/>
            <person name="Kikkawa E."/>
            <person name="Omura Y."/>
            <person name="Abe K."/>
            <person name="Kamihara K."/>
            <person name="Katsuta N."/>
            <person name="Sato K."/>
            <person name="Tanikawa M."/>
            <person name="Yamazaki M."/>
            <person name="Ninomiya K."/>
            <person name="Ishibashi T."/>
            <person name="Yamashita H."/>
            <person name="Murakawa K."/>
            <person name="Fujimori K."/>
            <person name="Tanai H."/>
            <person name="Kimata M."/>
            <person name="Watanabe M."/>
            <person name="Hiraoka S."/>
            <person name="Chiba Y."/>
            <person name="Ishida S."/>
            <person name="Ono Y."/>
            <person name="Takiguchi S."/>
            <person name="Watanabe S."/>
            <person name="Yosida M."/>
            <person name="Hotuta T."/>
            <person name="Kusano J."/>
            <person name="Kanehori K."/>
            <person name="Takahashi-Fujii A."/>
            <person name="Hara H."/>
            <person name="Tanase T.-O."/>
            <person name="Nomura Y."/>
            <person name="Togiya S."/>
            <person name="Komai F."/>
            <person name="Hara R."/>
            <person name="Takeuchi K."/>
            <person name="Arita M."/>
            <person name="Imose N."/>
            <person name="Musashino K."/>
            <person name="Yuuki H."/>
            <person name="Oshima A."/>
            <person name="Sasaki N."/>
            <person name="Aotsuka S."/>
            <person name="Yoshikawa Y."/>
            <person name="Matsunawa H."/>
            <person name="Ichihara T."/>
            <person name="Shiohata N."/>
            <person name="Sano S."/>
            <person name="Moriya S."/>
            <person name="Momiyama H."/>
            <person name="Satoh N."/>
            <person name="Takami S."/>
            <person name="Terashima Y."/>
            <person name="Suzuki O."/>
            <person name="Nakagawa S."/>
            <person name="Senoh A."/>
            <person name="Mizoguchi H."/>
            <person name="Goto Y."/>
            <person name="Shimizu F."/>
            <person name="Wakebe H."/>
            <person name="Hishigaki H."/>
            <person name="Watanabe T."/>
            <person name="Sugiyama A."/>
            <person name="Takemoto M."/>
            <person name="Kawakami B."/>
            <person name="Yamazaki M."/>
            <person name="Watanabe K."/>
            <person name="Kumagai A."/>
            <person name="Itakura S."/>
            <person name="Fukuzumi Y."/>
            <person name="Fujimori Y."/>
            <person name="Komiyama M."/>
            <person name="Tashiro H."/>
            <person name="Tanigami A."/>
            <person name="Fujiwara T."/>
            <person name="Ono T."/>
            <person name="Yamada K."/>
            <person name="Fujii Y."/>
            <person name="Ozaki K."/>
            <person name="Hirao M."/>
            <person name="Ohmori Y."/>
            <person name="Kawabata A."/>
            <person name="Hikiji T."/>
            <person name="Kobatake N."/>
            <person name="Inagaki H."/>
            <person name="Ikema Y."/>
            <person name="Okamoto S."/>
            <person name="Okitani R."/>
            <person name="Kawakami T."/>
            <person name="Noguchi S."/>
            <person name="Itoh T."/>
            <person name="Shigeta K."/>
            <person name="Senba T."/>
            <person name="Matsumura K."/>
            <person name="Nakajima Y."/>
            <person name="Mizuno T."/>
            <person name="Morinaga M."/>
            <person name="Sasaki M."/>
            <person name="Togashi T."/>
            <person name="Oyama M."/>
            <person name="Hata H."/>
            <person name="Watanabe M."/>
            <person name="Komatsu T."/>
            <person name="Mizushima-Sugano J."/>
            <person name="Satoh T."/>
            <person name="Shirai Y."/>
            <person name="Takahashi Y."/>
            <person name="Nakagawa K."/>
            <person name="Okumura K."/>
            <person name="Nagase T."/>
            <person name="Nomura N."/>
            <person name="Kikuchi H."/>
            <person name="Masuho Y."/>
            <person name="Yamashita R."/>
            <person name="Nakai K."/>
            <person name="Yada T."/>
            <person name="Nakamura Y."/>
            <person name="Ohara O."/>
            <person name="Isogai T."/>
            <person name="Sugano S."/>
        </authorList>
    </citation>
    <scope>NUCLEOTIDE SEQUENCE [LARGE SCALE MRNA] (ISOFORM 2)</scope>
    <source>
        <tissue>Synovium</tissue>
        <tissue>Thyroid</tissue>
    </source>
</reference>
<reference key="2">
    <citation type="journal article" date="2007" name="BMC Genomics">
        <title>The full-ORF clone resource of the German cDNA consortium.</title>
        <authorList>
            <person name="Bechtel S."/>
            <person name="Rosenfelder H."/>
            <person name="Duda A."/>
            <person name="Schmidt C.P."/>
            <person name="Ernst U."/>
            <person name="Wellenreuther R."/>
            <person name="Mehrle A."/>
            <person name="Schuster C."/>
            <person name="Bahr A."/>
            <person name="Bloecker H."/>
            <person name="Heubner D."/>
            <person name="Hoerlein A."/>
            <person name="Michel G."/>
            <person name="Wedler H."/>
            <person name="Koehrer K."/>
            <person name="Ottenwaelder B."/>
            <person name="Poustka A."/>
            <person name="Wiemann S."/>
            <person name="Schupp I."/>
        </authorList>
    </citation>
    <scope>NUCLEOTIDE SEQUENCE [LARGE SCALE MRNA] (ISOFORMS 1 AND 3)</scope>
    <source>
        <tissue>Testis</tissue>
    </source>
</reference>
<reference key="3">
    <citation type="journal article" date="2005" name="Nature">
        <title>Generation and annotation of the DNA sequences of human chromosomes 2 and 4.</title>
        <authorList>
            <person name="Hillier L.W."/>
            <person name="Graves T.A."/>
            <person name="Fulton R.S."/>
            <person name="Fulton L.A."/>
            <person name="Pepin K.H."/>
            <person name="Minx P."/>
            <person name="Wagner-McPherson C."/>
            <person name="Layman D."/>
            <person name="Wylie K."/>
            <person name="Sekhon M."/>
            <person name="Becker M.C."/>
            <person name="Fewell G.A."/>
            <person name="Delehaunty K.D."/>
            <person name="Miner T.L."/>
            <person name="Nash W.E."/>
            <person name="Kremitzki C."/>
            <person name="Oddy L."/>
            <person name="Du H."/>
            <person name="Sun H."/>
            <person name="Bradshaw-Cordum H."/>
            <person name="Ali J."/>
            <person name="Carter J."/>
            <person name="Cordes M."/>
            <person name="Harris A."/>
            <person name="Isak A."/>
            <person name="van Brunt A."/>
            <person name="Nguyen C."/>
            <person name="Du F."/>
            <person name="Courtney L."/>
            <person name="Kalicki J."/>
            <person name="Ozersky P."/>
            <person name="Abbott S."/>
            <person name="Armstrong J."/>
            <person name="Belter E.A."/>
            <person name="Caruso L."/>
            <person name="Cedroni M."/>
            <person name="Cotton M."/>
            <person name="Davidson T."/>
            <person name="Desai A."/>
            <person name="Elliott G."/>
            <person name="Erb T."/>
            <person name="Fronick C."/>
            <person name="Gaige T."/>
            <person name="Haakenson W."/>
            <person name="Haglund K."/>
            <person name="Holmes A."/>
            <person name="Harkins R."/>
            <person name="Kim K."/>
            <person name="Kruchowski S.S."/>
            <person name="Strong C.M."/>
            <person name="Grewal N."/>
            <person name="Goyea E."/>
            <person name="Hou S."/>
            <person name="Levy A."/>
            <person name="Martinka S."/>
            <person name="Mead K."/>
            <person name="McLellan M.D."/>
            <person name="Meyer R."/>
            <person name="Randall-Maher J."/>
            <person name="Tomlinson C."/>
            <person name="Dauphin-Kohlberg S."/>
            <person name="Kozlowicz-Reilly A."/>
            <person name="Shah N."/>
            <person name="Swearengen-Shahid S."/>
            <person name="Snider J."/>
            <person name="Strong J.T."/>
            <person name="Thompson J."/>
            <person name="Yoakum M."/>
            <person name="Leonard S."/>
            <person name="Pearman C."/>
            <person name="Trani L."/>
            <person name="Radionenko M."/>
            <person name="Waligorski J.E."/>
            <person name="Wang C."/>
            <person name="Rock S.M."/>
            <person name="Tin-Wollam A.-M."/>
            <person name="Maupin R."/>
            <person name="Latreille P."/>
            <person name="Wendl M.C."/>
            <person name="Yang S.-P."/>
            <person name="Pohl C."/>
            <person name="Wallis J.W."/>
            <person name="Spieth J."/>
            <person name="Bieri T.A."/>
            <person name="Berkowicz N."/>
            <person name="Nelson J.O."/>
            <person name="Osborne J."/>
            <person name="Ding L."/>
            <person name="Meyer R."/>
            <person name="Sabo A."/>
            <person name="Shotland Y."/>
            <person name="Sinha P."/>
            <person name="Wohldmann P.E."/>
            <person name="Cook L.L."/>
            <person name="Hickenbotham M.T."/>
            <person name="Eldred J."/>
            <person name="Williams D."/>
            <person name="Jones T.A."/>
            <person name="She X."/>
            <person name="Ciccarelli F.D."/>
            <person name="Izaurralde E."/>
            <person name="Taylor J."/>
            <person name="Schmutz J."/>
            <person name="Myers R.M."/>
            <person name="Cox D.R."/>
            <person name="Huang X."/>
            <person name="McPherson J.D."/>
            <person name="Mardis E.R."/>
            <person name="Clifton S.W."/>
            <person name="Warren W.C."/>
            <person name="Chinwalla A.T."/>
            <person name="Eddy S.R."/>
            <person name="Marra M.A."/>
            <person name="Ovcharenko I."/>
            <person name="Furey T.S."/>
            <person name="Miller W."/>
            <person name="Eichler E.E."/>
            <person name="Bork P."/>
            <person name="Suyama M."/>
            <person name="Torrents D."/>
            <person name="Waterston R.H."/>
            <person name="Wilson R.K."/>
        </authorList>
    </citation>
    <scope>NUCLEOTIDE SEQUENCE [LARGE SCALE GENOMIC DNA]</scope>
</reference>
<reference key="4">
    <citation type="journal article" date="2004" name="Genome Res.">
        <title>The status, quality, and expansion of the NIH full-length cDNA project: the Mammalian Gene Collection (MGC).</title>
        <authorList>
            <consortium name="The MGC Project Team"/>
        </authorList>
    </citation>
    <scope>NUCLEOTIDE SEQUENCE [LARGE SCALE MRNA] (ISOFORM 2)</scope>
    <scope>VARIANT SER-405</scope>
    <source>
        <tissue>Testis</tissue>
    </source>
</reference>
<reference key="5">
    <citation type="submission" date="2002-07" db="EMBL/GenBank/DDBJ databases">
        <authorList>
            <person name="Guo J.H."/>
            <person name="Yu L."/>
        </authorList>
    </citation>
    <scope>NUCLEOTIDE SEQUENCE [LARGE SCALE MRNA] OF 537-1161 (ISOFORM 2)</scope>
    <source>
        <tissue>Ovary</tissue>
    </source>
</reference>
<reference key="6">
    <citation type="journal article" date="1998" name="Nat. Biotechnol.">
        <title>Selection system for genes encoding nuclear-targeted proteins.</title>
        <authorList>
            <person name="Ueki N."/>
            <person name="Oda T."/>
            <person name="Kondo M."/>
            <person name="Yano K."/>
            <person name="Noguchi T."/>
            <person name="Muramatsu M.-A."/>
        </authorList>
    </citation>
    <scope>NUCLEOTIDE SEQUENCE [LARGE SCALE MRNA] OF 946-1161 (ISOFORM 1)</scope>
    <scope>SUBCELLULAR LOCATION</scope>
    <source>
        <tissue>Brain</tissue>
    </source>
</reference>
<reference key="7">
    <citation type="journal article" date="2006" name="Cell">
        <title>Global, in vivo, and site-specific phosphorylation dynamics in signaling networks.</title>
        <authorList>
            <person name="Olsen J.V."/>
            <person name="Blagoev B."/>
            <person name="Gnad F."/>
            <person name="Macek B."/>
            <person name="Kumar C."/>
            <person name="Mortensen P."/>
            <person name="Mann M."/>
        </authorList>
    </citation>
    <scope>PHOSPHORYLATION [LARGE SCALE ANALYSIS] AT SER-1107</scope>
    <scope>IDENTIFICATION BY MASS SPECTROMETRY [LARGE SCALE ANALYSIS]</scope>
    <source>
        <tissue>Cervix carcinoma</tissue>
    </source>
</reference>
<reference key="8">
    <citation type="journal article" date="2008" name="Mol. Cell">
        <title>Kinase-selective enrichment enables quantitative phosphoproteomics of the kinome across the cell cycle.</title>
        <authorList>
            <person name="Daub H."/>
            <person name="Olsen J.V."/>
            <person name="Bairlein M."/>
            <person name="Gnad F."/>
            <person name="Oppermann F.S."/>
            <person name="Korner R."/>
            <person name="Greff Z."/>
            <person name="Keri G."/>
            <person name="Stemmann O."/>
            <person name="Mann M."/>
        </authorList>
    </citation>
    <scope>PHOSPHORYLATION [LARGE SCALE ANALYSIS] AT THR-834 AND SER-1076</scope>
    <scope>IDENTIFICATION BY MASS SPECTROMETRY [LARGE SCALE ANALYSIS]</scope>
    <source>
        <tissue>Cervix carcinoma</tissue>
    </source>
</reference>
<reference key="9">
    <citation type="journal article" date="2009" name="Anal. Chem.">
        <title>Lys-N and trypsin cover complementary parts of the phosphoproteome in a refined SCX-based approach.</title>
        <authorList>
            <person name="Gauci S."/>
            <person name="Helbig A.O."/>
            <person name="Slijper M."/>
            <person name="Krijgsveld J."/>
            <person name="Heck A.J."/>
            <person name="Mohammed S."/>
        </authorList>
    </citation>
    <scope>IDENTIFICATION BY MASS SPECTROMETRY [LARGE SCALE ANALYSIS]</scope>
</reference>
<reference key="10">
    <citation type="journal article" date="2009" name="Mol. Cell. Proteomics">
        <title>Large-scale proteomics analysis of the human kinome.</title>
        <authorList>
            <person name="Oppermann F.S."/>
            <person name="Gnad F."/>
            <person name="Olsen J.V."/>
            <person name="Hornberger R."/>
            <person name="Greff Z."/>
            <person name="Keri G."/>
            <person name="Mann M."/>
            <person name="Daub H."/>
        </authorList>
    </citation>
    <scope>PHOSPHORYLATION [LARGE SCALE ANALYSIS] AT SER-14 AND SER-1107</scope>
    <scope>IDENTIFICATION BY MASS SPECTROMETRY [LARGE SCALE ANALYSIS]</scope>
</reference>
<reference key="11">
    <citation type="journal article" date="2009" name="Sci. Signal.">
        <title>Quantitative phosphoproteomic analysis of T cell receptor signaling reveals system-wide modulation of protein-protein interactions.</title>
        <authorList>
            <person name="Mayya V."/>
            <person name="Lundgren D.H."/>
            <person name="Hwang S.-I."/>
            <person name="Rezaul K."/>
            <person name="Wu L."/>
            <person name="Eng J.K."/>
            <person name="Rodionov V."/>
            <person name="Han D.K."/>
        </authorList>
    </citation>
    <scope>PHOSPHORYLATION [LARGE SCALE ANALYSIS] AT SER-1029 AND SER-1032</scope>
    <scope>IDENTIFICATION BY MASS SPECTROMETRY [LARGE SCALE ANALYSIS]</scope>
    <source>
        <tissue>Leukemic T-cell</tissue>
    </source>
</reference>
<reference key="12">
    <citation type="journal article" date="2010" name="Sci. Signal.">
        <title>Quantitative phosphoproteomics reveals widespread full phosphorylation site occupancy during mitosis.</title>
        <authorList>
            <person name="Olsen J.V."/>
            <person name="Vermeulen M."/>
            <person name="Santamaria A."/>
            <person name="Kumar C."/>
            <person name="Miller M.L."/>
            <person name="Jensen L.J."/>
            <person name="Gnad F."/>
            <person name="Cox J."/>
            <person name="Jensen T.S."/>
            <person name="Nigg E.A."/>
            <person name="Brunak S."/>
            <person name="Mann M."/>
        </authorList>
    </citation>
    <scope>PHOSPHORYLATION [LARGE SCALE ANALYSIS] AT SER-1029; SER-1107 AND SER-1111</scope>
    <scope>IDENTIFICATION BY MASS SPECTROMETRY [LARGE SCALE ANALYSIS]</scope>
    <source>
        <tissue>Cervix carcinoma</tissue>
    </source>
</reference>
<reference key="13">
    <citation type="journal article" date="2011" name="BMC Syst. Biol.">
        <title>Initial characterization of the human central proteome.</title>
        <authorList>
            <person name="Burkard T.R."/>
            <person name="Planyavsky M."/>
            <person name="Kaupe I."/>
            <person name="Breitwieser F.P."/>
            <person name="Buerckstuemmer T."/>
            <person name="Bennett K.L."/>
            <person name="Superti-Furga G."/>
            <person name="Colinge J."/>
        </authorList>
    </citation>
    <scope>IDENTIFICATION BY MASS SPECTROMETRY [LARGE SCALE ANALYSIS]</scope>
</reference>
<reference key="14">
    <citation type="journal article" date="2013" name="J. Proteome Res.">
        <title>Toward a comprehensive characterization of a human cancer cell phosphoproteome.</title>
        <authorList>
            <person name="Zhou H."/>
            <person name="Di Palma S."/>
            <person name="Preisinger C."/>
            <person name="Peng M."/>
            <person name="Polat A.N."/>
            <person name="Heck A.J."/>
            <person name="Mohammed S."/>
        </authorList>
    </citation>
    <scope>PHOSPHORYLATION [LARGE SCALE ANALYSIS] AT SER-689; SER-742; SER-817; SER-818; SER-1029; SER-1032; SER-1041; SER-1107 AND SER-1111</scope>
    <scope>IDENTIFICATION BY MASS SPECTROMETRY [LARGE SCALE ANALYSIS]</scope>
    <source>
        <tissue>Cervix carcinoma</tissue>
        <tissue>Erythroleukemia</tissue>
    </source>
</reference>
<reference key="15">
    <citation type="journal article" date="2014" name="J. Proteomics">
        <title>An enzyme assisted RP-RPLC approach for in-depth analysis of human liver phosphoproteome.</title>
        <authorList>
            <person name="Bian Y."/>
            <person name="Song C."/>
            <person name="Cheng K."/>
            <person name="Dong M."/>
            <person name="Wang F."/>
            <person name="Huang J."/>
            <person name="Sun D."/>
            <person name="Wang L."/>
            <person name="Ye M."/>
            <person name="Zou H."/>
        </authorList>
    </citation>
    <scope>PHOSPHORYLATION [LARGE SCALE ANALYSIS] AT SER-14 AND SER-1039</scope>
    <scope>IDENTIFICATION BY MASS SPECTROMETRY [LARGE SCALE ANALYSIS]</scope>
    <source>
        <tissue>Liver</tissue>
    </source>
</reference>
<reference evidence="14 15" key="16">
    <citation type="journal article" date="2016" name="Structure">
        <title>Family-wide Structural Analysis of Human Numb-Associated Protein Kinases.</title>
        <authorList>
            <person name="Sorrell F.J."/>
            <person name="Szklarz M."/>
            <person name="Abdul Azeez K.R."/>
            <person name="Elkins J.M."/>
            <person name="Knapp S."/>
        </authorList>
    </citation>
    <scope>X-RAY CRYSTALLOGRAPHY (1.72 ANGSTROMS) OF 39-344 IN COMPLEX WITH INHIBITORS</scope>
    <scope>CATALYTIC ACTIVITY</scope>
</reference>
<reference evidence="16 17" key="17">
    <citation type="submission" date="2016-02" db="PDB data bank">
        <title>Crystal Structure of BMP-2-inducible kinase in complex with an Indazole inhibitor.</title>
        <authorList>
            <person name="Counago R.M."/>
            <person name="Sorrell F.J."/>
            <person name="Krojer T."/>
            <person name="Elkins J.M."/>
            <person name="Gileadi O."/>
            <person name="Willson T.M."/>
            <person name="Arrowsmith C.H."/>
            <person name="Edwards A.M."/>
            <person name="Bountra C."/>
            <person name="Arruda P."/>
        </authorList>
    </citation>
    <scope>X-RAY CRYSTALLOGRAPHY (2.40 ANGSTROMS) OF 42-343</scope>
</reference>
<reference evidence="18" key="18">
    <citation type="submission" date="2016-03" db="PDB data bank">
        <title>Crystal Structure of BMP-2-inducible kinase in complex with a 3-acylaminoindazole inhibitor GSK3236425A.</title>
        <authorList>
            <person name="Counago R.M."/>
            <person name="Sorrell F.J."/>
            <person name="Krojer T."/>
            <person name="Savitsky P."/>
            <person name="Elkins J.M."/>
            <person name="Axtman A."/>
            <person name="Drewry D."/>
            <person name="Wells C."/>
            <person name="Zhang C."/>
            <person name="Zuercher W."/>
            <person name="Willson T.M."/>
            <person name="Arrowsmith C.H."/>
            <person name="Edwards A.M."/>
            <person name="Bountra C."/>
            <person name="Arruda P."/>
            <person name="Gileadi O."/>
        </authorList>
    </citation>
    <scope>X-RAY CRYSTALLOGRAPHY (2.41 ANGSTROMS) OF 38-345</scope>
</reference>
<reference key="19">
    <citation type="journal article" date="2007" name="Nature">
        <title>Patterns of somatic mutation in human cancer genomes.</title>
        <authorList>
            <person name="Greenman C."/>
            <person name="Stephens P."/>
            <person name="Smith R."/>
            <person name="Dalgliesh G.L."/>
            <person name="Hunter C."/>
            <person name="Bignell G."/>
            <person name="Davies H."/>
            <person name="Teague J."/>
            <person name="Butler A."/>
            <person name="Stevens C."/>
            <person name="Edkins S."/>
            <person name="O'Meara S."/>
            <person name="Vastrik I."/>
            <person name="Schmidt E.E."/>
            <person name="Avis T."/>
            <person name="Barthorpe S."/>
            <person name="Bhamra G."/>
            <person name="Buck G."/>
            <person name="Choudhury B."/>
            <person name="Clements J."/>
            <person name="Cole J."/>
            <person name="Dicks E."/>
            <person name="Forbes S."/>
            <person name="Gray K."/>
            <person name="Halliday K."/>
            <person name="Harrison R."/>
            <person name="Hills K."/>
            <person name="Hinton J."/>
            <person name="Jenkinson A."/>
            <person name="Jones D."/>
            <person name="Menzies A."/>
            <person name="Mironenko T."/>
            <person name="Perry J."/>
            <person name="Raine K."/>
            <person name="Richardson D."/>
            <person name="Shepherd R."/>
            <person name="Small A."/>
            <person name="Tofts C."/>
            <person name="Varian J."/>
            <person name="Webb T."/>
            <person name="West S."/>
            <person name="Widaa S."/>
            <person name="Yates A."/>
            <person name="Cahill D.P."/>
            <person name="Louis D.N."/>
            <person name="Goldstraw P."/>
            <person name="Nicholson A.G."/>
            <person name="Brasseur F."/>
            <person name="Looijenga L."/>
            <person name="Weber B.L."/>
            <person name="Chiew Y.-E."/>
            <person name="DeFazio A."/>
            <person name="Greaves M.F."/>
            <person name="Green A.R."/>
            <person name="Campbell P."/>
            <person name="Birney E."/>
            <person name="Easton D.F."/>
            <person name="Chenevix-Trench G."/>
            <person name="Tan M.-H."/>
            <person name="Khoo S.K."/>
            <person name="Teh B.T."/>
            <person name="Yuen S.T."/>
            <person name="Leung S.Y."/>
            <person name="Wooster R."/>
            <person name="Futreal P.A."/>
            <person name="Stratton M.R."/>
        </authorList>
    </citation>
    <scope>VARIANTS [LARGE SCALE ANALYSIS] MET-68; VAL-212 AND HIS-288</scope>
</reference>
<gene>
    <name type="primary">BMP2K</name>
    <name type="synonym">BIKE</name>
    <name type="ORF">HRIHFB2017</name>
</gene>
<keyword id="KW-0002">3D-structure</keyword>
<keyword id="KW-0025">Alternative splicing</keyword>
<keyword id="KW-0067">ATP-binding</keyword>
<keyword id="KW-0418">Kinase</keyword>
<keyword id="KW-0547">Nucleotide-binding</keyword>
<keyword id="KW-0539">Nucleus</keyword>
<keyword id="KW-0597">Phosphoprotein</keyword>
<keyword id="KW-1267">Proteomics identification</keyword>
<keyword id="KW-1185">Reference proteome</keyword>
<keyword id="KW-0723">Serine/threonine-protein kinase</keyword>
<keyword id="KW-0808">Transferase</keyword>
<feature type="chain" id="PRO_0000085663" description="BMP-2-inducible protein kinase">
    <location>
        <begin position="1"/>
        <end position="1161"/>
    </location>
</feature>
<feature type="domain" description="Protein kinase" evidence="2">
    <location>
        <begin position="51"/>
        <end position="316"/>
    </location>
</feature>
<feature type="region of interest" description="Disordered" evidence="4">
    <location>
        <begin position="1"/>
        <end position="20"/>
    </location>
</feature>
<feature type="region of interest" description="Disordered" evidence="4">
    <location>
        <begin position="358"/>
        <end position="439"/>
    </location>
</feature>
<feature type="region of interest" description="Disordered" evidence="4">
    <location>
        <begin position="453"/>
        <end position="495"/>
    </location>
</feature>
<feature type="region of interest" description="Disordered" evidence="4">
    <location>
        <begin position="610"/>
        <end position="630"/>
    </location>
</feature>
<feature type="region of interest" description="Disordered" evidence="4">
    <location>
        <begin position="655"/>
        <end position="832"/>
    </location>
</feature>
<feature type="region of interest" description="Disordered" evidence="4">
    <location>
        <begin position="965"/>
        <end position="1035"/>
    </location>
</feature>
<feature type="region of interest" description="Disordered" evidence="4">
    <location>
        <begin position="1137"/>
        <end position="1161"/>
    </location>
</feature>
<feature type="compositionally biased region" description="Polar residues" evidence="4">
    <location>
        <begin position="361"/>
        <end position="394"/>
    </location>
</feature>
<feature type="compositionally biased region" description="Low complexity" evidence="4">
    <location>
        <begin position="422"/>
        <end position="439"/>
    </location>
</feature>
<feature type="compositionally biased region" description="Low complexity" evidence="4">
    <location>
        <begin position="460"/>
        <end position="485"/>
    </location>
</feature>
<feature type="compositionally biased region" description="Polar residues" evidence="4">
    <location>
        <begin position="610"/>
        <end position="619"/>
    </location>
</feature>
<feature type="compositionally biased region" description="Polar residues" evidence="4">
    <location>
        <begin position="697"/>
        <end position="718"/>
    </location>
</feature>
<feature type="compositionally biased region" description="Polar residues" evidence="4">
    <location>
        <begin position="726"/>
        <end position="735"/>
    </location>
</feature>
<feature type="compositionally biased region" description="Acidic residues" evidence="4">
    <location>
        <begin position="755"/>
        <end position="779"/>
    </location>
</feature>
<feature type="compositionally biased region" description="Basic and acidic residues" evidence="4">
    <location>
        <begin position="798"/>
        <end position="813"/>
    </location>
</feature>
<feature type="compositionally biased region" description="Basic residues" evidence="4">
    <location>
        <begin position="970"/>
        <end position="984"/>
    </location>
</feature>
<feature type="compositionally biased region" description="Low complexity" evidence="4">
    <location>
        <begin position="1000"/>
        <end position="1011"/>
    </location>
</feature>
<feature type="compositionally biased region" description="Polar residues" evidence="4">
    <location>
        <begin position="1137"/>
        <end position="1146"/>
    </location>
</feature>
<feature type="active site" description="Proton acceptor" evidence="2 3">
    <location>
        <position position="180"/>
    </location>
</feature>
<feature type="binding site" evidence="2">
    <location>
        <begin position="57"/>
        <end position="65"/>
    </location>
    <ligand>
        <name>ATP</name>
        <dbReference type="ChEBI" id="CHEBI:30616"/>
    </ligand>
</feature>
<feature type="binding site" evidence="2">
    <location>
        <position position="79"/>
    </location>
    <ligand>
        <name>ATP</name>
        <dbReference type="ChEBI" id="CHEBI:30616"/>
    </ligand>
</feature>
<feature type="modified residue" description="Phosphoserine" evidence="21 25">
    <location>
        <position position="14"/>
    </location>
</feature>
<feature type="modified residue" description="Phosphoserine" evidence="24">
    <location>
        <position position="689"/>
    </location>
</feature>
<feature type="modified residue" description="Phosphoserine" evidence="24">
    <location>
        <position position="742"/>
    </location>
</feature>
<feature type="modified residue" description="Phosphoserine" evidence="24">
    <location>
        <position position="817"/>
    </location>
</feature>
<feature type="modified residue" description="Phosphoserine" evidence="24">
    <location>
        <position position="818"/>
    </location>
</feature>
<feature type="modified residue" description="Phosphothreonine" evidence="20">
    <location>
        <position position="834"/>
    </location>
</feature>
<feature type="modified residue" description="Phosphoserine" evidence="1">
    <location>
        <position position="928"/>
    </location>
</feature>
<feature type="modified residue" description="Phosphoserine" evidence="22 23 24">
    <location>
        <position position="1029"/>
    </location>
</feature>
<feature type="modified residue" description="Phosphoserine" evidence="1">
    <location>
        <position position="1031"/>
    </location>
</feature>
<feature type="modified residue" description="Phosphoserine" evidence="22 24">
    <location>
        <position position="1032"/>
    </location>
</feature>
<feature type="modified residue" description="Phosphoserine" evidence="25">
    <location>
        <position position="1039"/>
    </location>
</feature>
<feature type="modified residue" description="Phosphoserine" evidence="24">
    <location>
        <position position="1041"/>
    </location>
</feature>
<feature type="modified residue" description="Phosphoserine" evidence="20">
    <location>
        <position position="1076"/>
    </location>
</feature>
<feature type="modified residue" description="Phosphoserine" evidence="19 21 23 24">
    <location>
        <position position="1107"/>
    </location>
</feature>
<feature type="modified residue" description="Phosphoserine" evidence="23 24">
    <location>
        <position position="1111"/>
    </location>
</feature>
<feature type="splice variant" id="VSP_008093" description="In isoform 3." evidence="11">
    <original>NSSIPSALPEP</original>
    <variation>KCCKQLLRHGALLTEILLFLQLFLNR</variation>
    <location>
        <begin position="330"/>
        <end position="340"/>
    </location>
</feature>
<feature type="splice variant" id="VSP_008091" description="In isoform 2 and isoform 3." evidence="9 10 11 12">
    <original>NRLEERASSDKN</original>
    <variation>SKGHLKAYFASQ</variation>
    <location>
        <begin position="651"/>
        <end position="662"/>
    </location>
</feature>
<feature type="splice variant" id="VSP_008092" description="In isoform 2 and isoform 3." evidence="9 10 11 12">
    <location>
        <begin position="663"/>
        <end position="1161"/>
    </location>
</feature>
<feature type="sequence variant" id="VAR_040388" description="In a lung squamous cell carcinoma sample; somatic mutation; dbSNP:rs770167074." evidence="6">
    <original>V</original>
    <variation>M</variation>
    <location>
        <position position="68"/>
    </location>
</feature>
<feature type="sequence variant" id="VAR_040389" description="In dbSNP:rs56143363." evidence="6">
    <original>D</original>
    <variation>V</variation>
    <location>
        <position position="212"/>
    </location>
</feature>
<feature type="sequence variant" id="VAR_040390" description="In dbSNP:rs55782848." evidence="6">
    <original>R</original>
    <variation>H</variation>
    <location>
        <position position="288"/>
    </location>
</feature>
<feature type="sequence variant" id="VAR_051618" description="In dbSNP:rs2288255." evidence="5">
    <original>G</original>
    <variation>S</variation>
    <location>
        <position position="405"/>
    </location>
</feature>
<feature type="sequence variant" id="VAR_059765" description="In dbSNP:rs2114202.">
    <original>Q</original>
    <variation>H</variation>
    <location>
        <position position="486"/>
    </location>
</feature>
<feature type="sequence variant" id="VAR_051619" description="In dbSNP:rs12507099.">
    <original>T</original>
    <variation>S</variation>
    <location>
        <position position="1002"/>
    </location>
</feature>
<feature type="sequence conflict" description="In Ref. 4; AAH36021." evidence="13" ref="4">
    <original>T</original>
    <variation>A</variation>
    <location>
        <position position="342"/>
    </location>
</feature>
<feature type="sequence conflict" description="In Ref. 2; CAB70863." evidence="13" ref="2">
    <location>
        <begin position="471"/>
        <end position="486"/>
    </location>
</feature>
<feature type="sequence conflict" description="In Ref. 4; AAH36021." evidence="13" ref="4">
    <original>Q</original>
    <variation>R</variation>
    <location>
        <position position="478"/>
    </location>
</feature>
<feature type="strand" evidence="26">
    <location>
        <begin position="43"/>
        <end position="46"/>
    </location>
</feature>
<feature type="strand" evidence="26">
    <location>
        <begin position="49"/>
        <end position="59"/>
    </location>
</feature>
<feature type="strand" evidence="26">
    <location>
        <begin position="64"/>
        <end position="70"/>
    </location>
</feature>
<feature type="strand" evidence="26">
    <location>
        <begin position="75"/>
        <end position="85"/>
    </location>
</feature>
<feature type="helix" evidence="26">
    <location>
        <begin position="86"/>
        <end position="102"/>
    </location>
</feature>
<feature type="strand" evidence="26">
    <location>
        <begin position="111"/>
        <end position="118"/>
    </location>
</feature>
<feature type="strand" evidence="26">
    <location>
        <begin position="120"/>
        <end position="122"/>
    </location>
</feature>
<feature type="strand" evidence="26">
    <location>
        <begin position="124"/>
        <end position="131"/>
    </location>
</feature>
<feature type="helix" evidence="26">
    <location>
        <begin position="138"/>
        <end position="144"/>
    </location>
</feature>
<feature type="turn" evidence="26">
    <location>
        <begin position="145"/>
        <end position="148"/>
    </location>
</feature>
<feature type="helix" evidence="26">
    <location>
        <begin position="152"/>
        <end position="170"/>
    </location>
</feature>
<feature type="strand" evidence="26">
    <location>
        <begin position="172"/>
        <end position="174"/>
    </location>
</feature>
<feature type="helix" evidence="26">
    <location>
        <begin position="183"/>
        <end position="185"/>
    </location>
</feature>
<feature type="strand" evidence="26">
    <location>
        <begin position="186"/>
        <end position="188"/>
    </location>
</feature>
<feature type="strand" evidence="26">
    <location>
        <begin position="194"/>
        <end position="196"/>
    </location>
</feature>
<feature type="helix" evidence="26">
    <location>
        <begin position="199"/>
        <end position="201"/>
    </location>
</feature>
<feature type="helix" evidence="26">
    <location>
        <begin position="209"/>
        <end position="212"/>
    </location>
</feature>
<feature type="helix" evidence="26">
    <location>
        <begin position="214"/>
        <end position="224"/>
    </location>
</feature>
<feature type="helix" evidence="26">
    <location>
        <begin position="227"/>
        <end position="229"/>
    </location>
</feature>
<feature type="helix" evidence="26">
    <location>
        <begin position="232"/>
        <end position="234"/>
    </location>
</feature>
<feature type="helix" evidence="26">
    <location>
        <begin position="245"/>
        <end position="261"/>
    </location>
</feature>
<feature type="turn" evidence="26">
    <location>
        <begin position="265"/>
        <end position="268"/>
    </location>
</feature>
<feature type="helix" evidence="26">
    <location>
        <begin position="270"/>
        <end position="275"/>
    </location>
</feature>
<feature type="helix" evidence="26">
    <location>
        <begin position="288"/>
        <end position="297"/>
    </location>
</feature>
<feature type="helix" evidence="26">
    <location>
        <begin position="302"/>
        <end position="304"/>
    </location>
</feature>
<feature type="helix" evidence="26">
    <location>
        <begin position="308"/>
        <end position="318"/>
    </location>
</feature>
<dbReference type="EC" id="2.7.11.1" evidence="7"/>
<dbReference type="EMBL" id="AK075278">
    <property type="protein sequence ID" value="BAC11515.1"/>
    <property type="molecule type" value="mRNA"/>
</dbReference>
<dbReference type="EMBL" id="AK292147">
    <property type="protein sequence ID" value="BAF84836.1"/>
    <property type="molecule type" value="mRNA"/>
</dbReference>
<dbReference type="EMBL" id="AL137275">
    <property type="protein sequence ID" value="CAB70673.1"/>
    <property type="molecule type" value="mRNA"/>
</dbReference>
<dbReference type="EMBL" id="AL137661">
    <property type="protein sequence ID" value="CAB70863.1"/>
    <property type="molecule type" value="mRNA"/>
</dbReference>
<dbReference type="EMBL" id="AC098818">
    <property type="protein sequence ID" value="AAY40926.1"/>
    <property type="molecule type" value="Genomic_DNA"/>
</dbReference>
<dbReference type="EMBL" id="BC036021">
    <property type="protein sequence ID" value="AAH36021.1"/>
    <property type="molecule type" value="mRNA"/>
</dbReference>
<dbReference type="EMBL" id="AF527532">
    <property type="protein sequence ID" value="AAM88867.1"/>
    <property type="molecule type" value="mRNA"/>
</dbReference>
<dbReference type="EMBL" id="AB015331">
    <property type="protein sequence ID" value="BAA34790.1"/>
    <property type="molecule type" value="mRNA"/>
</dbReference>
<dbReference type="CCDS" id="CCDS34019.1">
    <molecule id="Q9NSY1-2"/>
</dbReference>
<dbReference type="CCDS" id="CCDS47083.1">
    <molecule id="Q9NSY1-1"/>
</dbReference>
<dbReference type="PIR" id="T46347">
    <property type="entry name" value="T46347"/>
</dbReference>
<dbReference type="PIR" id="T46364">
    <property type="entry name" value="T46364"/>
</dbReference>
<dbReference type="RefSeq" id="NP_060063.2">
    <molecule id="Q9NSY1-2"/>
    <property type="nucleotide sequence ID" value="NM_017593.3"/>
</dbReference>
<dbReference type="RefSeq" id="NP_942595.1">
    <molecule id="Q9NSY1-1"/>
    <property type="nucleotide sequence ID" value="NM_198892.2"/>
</dbReference>
<dbReference type="PDB" id="4W9W">
    <property type="method" value="X-ray"/>
    <property type="resolution" value="1.72 A"/>
    <property type="chains" value="A=39-344"/>
</dbReference>
<dbReference type="PDB" id="4W9X">
    <property type="method" value="X-ray"/>
    <property type="resolution" value="2.14 A"/>
    <property type="chains" value="A=38-345"/>
</dbReference>
<dbReference type="PDB" id="5I3O">
    <property type="method" value="X-ray"/>
    <property type="resolution" value="2.40 A"/>
    <property type="chains" value="A/B=42-343"/>
</dbReference>
<dbReference type="PDB" id="5I3R">
    <property type="method" value="X-ray"/>
    <property type="resolution" value="2.40 A"/>
    <property type="chains" value="A/B=42-343"/>
</dbReference>
<dbReference type="PDB" id="5IKW">
    <property type="method" value="X-ray"/>
    <property type="resolution" value="2.41 A"/>
    <property type="chains" value="A=38-345"/>
</dbReference>
<dbReference type="PDBsum" id="4W9W"/>
<dbReference type="PDBsum" id="4W9X"/>
<dbReference type="PDBsum" id="5I3O"/>
<dbReference type="PDBsum" id="5I3R"/>
<dbReference type="PDBsum" id="5IKW"/>
<dbReference type="SMR" id="Q9NSY1"/>
<dbReference type="BioGRID" id="120735">
    <property type="interactions" value="119"/>
</dbReference>
<dbReference type="FunCoup" id="Q9NSY1">
    <property type="interactions" value="3570"/>
</dbReference>
<dbReference type="IntAct" id="Q9NSY1">
    <property type="interactions" value="123"/>
</dbReference>
<dbReference type="MINT" id="Q9NSY1"/>
<dbReference type="STRING" id="9606.ENSP00000334836"/>
<dbReference type="BindingDB" id="Q9NSY1"/>
<dbReference type="ChEMBL" id="CHEMBL4522"/>
<dbReference type="DrugBank" id="DB12010">
    <property type="generic name" value="Fostamatinib"/>
</dbReference>
<dbReference type="DrugCentral" id="Q9NSY1"/>
<dbReference type="GuidetoPHARMACOLOGY" id="1941"/>
<dbReference type="GlyGen" id="Q9NSY1">
    <property type="glycosylation" value="6 sites, 1 O-linked glycan (3 sites)"/>
</dbReference>
<dbReference type="iPTMnet" id="Q9NSY1"/>
<dbReference type="PhosphoSitePlus" id="Q9NSY1"/>
<dbReference type="BioMuta" id="BMP2K"/>
<dbReference type="DMDM" id="34222653"/>
<dbReference type="CPTAC" id="CPTAC-2954"/>
<dbReference type="CPTAC" id="CPTAC-2955"/>
<dbReference type="jPOST" id="Q9NSY1"/>
<dbReference type="MassIVE" id="Q9NSY1"/>
<dbReference type="PaxDb" id="9606-ENSP00000334836"/>
<dbReference type="PeptideAtlas" id="Q9NSY1"/>
<dbReference type="ProteomicsDB" id="82594">
    <molecule id="Q9NSY1-1"/>
</dbReference>
<dbReference type="ProteomicsDB" id="82595">
    <molecule id="Q9NSY1-2"/>
</dbReference>
<dbReference type="ProteomicsDB" id="82596">
    <molecule id="Q9NSY1-3"/>
</dbReference>
<dbReference type="Pumba" id="Q9NSY1"/>
<dbReference type="Antibodypedia" id="24948">
    <property type="antibodies" value="192 antibodies from 27 providers"/>
</dbReference>
<dbReference type="DNASU" id="55589"/>
<dbReference type="Ensembl" id="ENST00000502613.3">
    <molecule id="Q9NSY1-1"/>
    <property type="protein sequence ID" value="ENSP00000424668.2"/>
    <property type="gene ID" value="ENSG00000138756.19"/>
</dbReference>
<dbReference type="Ensembl" id="ENST00000502871.5">
    <molecule id="Q9NSY1-2"/>
    <property type="protein sequence ID" value="ENSP00000421768.1"/>
    <property type="gene ID" value="ENSG00000138756.19"/>
</dbReference>
<dbReference type="GeneID" id="55589"/>
<dbReference type="KEGG" id="hsa:55589"/>
<dbReference type="MANE-Select" id="ENST00000502613.3">
    <property type="protein sequence ID" value="ENSP00000424668.2"/>
    <property type="RefSeq nucleotide sequence ID" value="NM_198892.2"/>
    <property type="RefSeq protein sequence ID" value="NP_942595.1"/>
</dbReference>
<dbReference type="UCSC" id="uc003hlj.4">
    <molecule id="Q9NSY1-1"/>
    <property type="organism name" value="human"/>
</dbReference>
<dbReference type="AGR" id="HGNC:18041"/>
<dbReference type="CTD" id="55589"/>
<dbReference type="DisGeNET" id="55589"/>
<dbReference type="GeneCards" id="BMP2K"/>
<dbReference type="HGNC" id="HGNC:18041">
    <property type="gene designation" value="BMP2K"/>
</dbReference>
<dbReference type="HPA" id="ENSG00000138756">
    <property type="expression patterns" value="Low tissue specificity"/>
</dbReference>
<dbReference type="MIM" id="617648">
    <property type="type" value="gene"/>
</dbReference>
<dbReference type="neXtProt" id="NX_Q9NSY1"/>
<dbReference type="OpenTargets" id="ENSG00000138756"/>
<dbReference type="PharmGKB" id="PA134992822"/>
<dbReference type="VEuPathDB" id="HostDB:ENSG00000138756"/>
<dbReference type="eggNOG" id="KOG1989">
    <property type="taxonomic scope" value="Eukaryota"/>
</dbReference>
<dbReference type="GeneTree" id="ENSGT00940000157548"/>
<dbReference type="HOGENOM" id="CLU_000288_109_5_1"/>
<dbReference type="InParanoid" id="Q9NSY1"/>
<dbReference type="OMA" id="YPTVMQQ"/>
<dbReference type="OrthoDB" id="2018507at2759"/>
<dbReference type="PAN-GO" id="Q9NSY1">
    <property type="GO annotations" value="9 GO annotations based on evolutionary models"/>
</dbReference>
<dbReference type="PhylomeDB" id="Q9NSY1"/>
<dbReference type="TreeFam" id="TF335936"/>
<dbReference type="PathwayCommons" id="Q9NSY1"/>
<dbReference type="SignaLink" id="Q9NSY1"/>
<dbReference type="BioGRID-ORCS" id="55589">
    <property type="hits" value="19 hits in 1189 CRISPR screens"/>
</dbReference>
<dbReference type="ChiTaRS" id="BMP2K">
    <property type="organism name" value="human"/>
</dbReference>
<dbReference type="EvolutionaryTrace" id="Q9NSY1"/>
<dbReference type="GeneWiki" id="BMP2K"/>
<dbReference type="GenomeRNAi" id="55589"/>
<dbReference type="Pharos" id="Q9NSY1">
    <property type="development level" value="Tchem"/>
</dbReference>
<dbReference type="PRO" id="PR:Q9NSY1"/>
<dbReference type="Proteomes" id="UP000005640">
    <property type="component" value="Chromosome 4"/>
</dbReference>
<dbReference type="RNAct" id="Q9NSY1">
    <property type="molecule type" value="protein"/>
</dbReference>
<dbReference type="Bgee" id="ENSG00000138756">
    <property type="expression patterns" value="Expressed in adrenal tissue and 196 other cell types or tissues"/>
</dbReference>
<dbReference type="ExpressionAtlas" id="Q9NSY1">
    <property type="expression patterns" value="baseline and differential"/>
</dbReference>
<dbReference type="GO" id="GO:0005737">
    <property type="term" value="C:cytoplasm"/>
    <property type="evidence" value="ECO:0000318"/>
    <property type="project" value="GO_Central"/>
</dbReference>
<dbReference type="GO" id="GO:0016607">
    <property type="term" value="C:nuclear speck"/>
    <property type="evidence" value="ECO:0000314"/>
    <property type="project" value="HPA"/>
</dbReference>
<dbReference type="GO" id="GO:0005634">
    <property type="term" value="C:nucleus"/>
    <property type="evidence" value="ECO:0000318"/>
    <property type="project" value="GO_Central"/>
</dbReference>
<dbReference type="GO" id="GO:0035612">
    <property type="term" value="F:AP-2 adaptor complex binding"/>
    <property type="evidence" value="ECO:0000318"/>
    <property type="project" value="GO_Central"/>
</dbReference>
<dbReference type="GO" id="GO:0005524">
    <property type="term" value="F:ATP binding"/>
    <property type="evidence" value="ECO:0007669"/>
    <property type="project" value="UniProtKB-KW"/>
</dbReference>
<dbReference type="GO" id="GO:0019208">
    <property type="term" value="F:phosphatase regulator activity"/>
    <property type="evidence" value="ECO:0000318"/>
    <property type="project" value="GO_Central"/>
</dbReference>
<dbReference type="GO" id="GO:0106310">
    <property type="term" value="F:protein serine kinase activity"/>
    <property type="evidence" value="ECO:0007669"/>
    <property type="project" value="RHEA"/>
</dbReference>
<dbReference type="GO" id="GO:0004674">
    <property type="term" value="F:protein serine/threonine kinase activity"/>
    <property type="evidence" value="ECO:0000318"/>
    <property type="project" value="GO_Central"/>
</dbReference>
<dbReference type="GO" id="GO:0045747">
    <property type="term" value="P:positive regulation of Notch signaling pathway"/>
    <property type="evidence" value="ECO:0000318"/>
    <property type="project" value="GO_Central"/>
</dbReference>
<dbReference type="GO" id="GO:0030500">
    <property type="term" value="P:regulation of bone mineralization"/>
    <property type="evidence" value="ECO:0000318"/>
    <property type="project" value="GO_Central"/>
</dbReference>
<dbReference type="GO" id="GO:2000369">
    <property type="term" value="P:regulation of clathrin-dependent endocytosis"/>
    <property type="evidence" value="ECO:0000318"/>
    <property type="project" value="GO_Central"/>
</dbReference>
<dbReference type="CDD" id="cd14037">
    <property type="entry name" value="STKc_NAK_like"/>
    <property type="match status" value="1"/>
</dbReference>
<dbReference type="FunFam" id="1.10.510.10:FF:000072">
    <property type="entry name" value="AP2 associated kinase 1"/>
    <property type="match status" value="1"/>
</dbReference>
<dbReference type="Gene3D" id="1.10.510.10">
    <property type="entry name" value="Transferase(Phosphotransferase) domain 1"/>
    <property type="match status" value="1"/>
</dbReference>
<dbReference type="InterPro" id="IPR051744">
    <property type="entry name" value="AP2_assoc_SerThr_kinase"/>
</dbReference>
<dbReference type="InterPro" id="IPR028182">
    <property type="entry name" value="BMP2K_C"/>
</dbReference>
<dbReference type="InterPro" id="IPR011009">
    <property type="entry name" value="Kinase-like_dom_sf"/>
</dbReference>
<dbReference type="InterPro" id="IPR000719">
    <property type="entry name" value="Prot_kinase_dom"/>
</dbReference>
<dbReference type="InterPro" id="IPR008271">
    <property type="entry name" value="Ser/Thr_kinase_AS"/>
</dbReference>
<dbReference type="PANTHER" id="PTHR47907:SF4">
    <property type="entry name" value="BMP-2-INDUCIBLE PROTEIN KINASE ISOFORM X1"/>
    <property type="match status" value="1"/>
</dbReference>
<dbReference type="PANTHER" id="PTHR47907">
    <property type="entry name" value="PROTEIN KINASE DOMAIN-CONTAINING PROTEIN"/>
    <property type="match status" value="1"/>
</dbReference>
<dbReference type="Pfam" id="PF15282">
    <property type="entry name" value="BMP2K_C"/>
    <property type="match status" value="1"/>
</dbReference>
<dbReference type="Pfam" id="PF00069">
    <property type="entry name" value="Pkinase"/>
    <property type="match status" value="1"/>
</dbReference>
<dbReference type="SMART" id="SM00220">
    <property type="entry name" value="S_TKc"/>
    <property type="match status" value="1"/>
</dbReference>
<dbReference type="SUPFAM" id="SSF56112">
    <property type="entry name" value="Protein kinase-like (PK-like)"/>
    <property type="match status" value="1"/>
</dbReference>
<dbReference type="PROSITE" id="PS50011">
    <property type="entry name" value="PROTEIN_KINASE_DOM"/>
    <property type="match status" value="1"/>
</dbReference>
<dbReference type="PROSITE" id="PS00108">
    <property type="entry name" value="PROTEIN_KINASE_ST"/>
    <property type="match status" value="1"/>
</dbReference>
<sequence length="1161" mass="129172">MKKFSRMPKSEGGSGGGAAGGGAGGAGAGAGCGSGGSSVGVRVFAVGRHQVTLEESLAEGGFSTVFLVRTHGGIRCALKRMYVNNMPDLNVCKREITIMKELSGHKNIVGYLDCAVNSISDNVWEVLILMEYCRAGQVVNQMNKKLQTGFTEPEVLQIFCDTCEAVARLHQCKTPIIHRDLKVENILLNDGGNYVLCDFGSATNKFLNPQKDGVNVVEEEIKKYTTLSYRAPEMINLYGGKPITTKADIWALGCLLYKLCFFTLPFGESQVAICDGNFTIPDNSRYSRNIHCLIRFMLEPDPEHRPDIFQVSYFAFKFAKKDCPVSNINNSSIPSALPEPMTASEAAARKSQIKARITDTIGPTETSIAPRQRPKANSATTATPSVLTIQSSATPVKVLAPGEFGNHRPKGALRPGNGPEILLGQGPPQQPPQQHRVLQQLQQGDWRLQQLHLQHRHPHQQQQQQQQQQQQQQQQQQQQQQQQQQQHHHHHHHHLLQDAYMQQYQHATQQQQMLQQQFLMHSVYQPQPSASQYPTMMPQYQQAFFQQQMLAQHQPSQQQASPEYLTSPQEFSPALVSYTSSLPAQVGTIMDSSYSANRSVADKEAIANFTNQKNISNPPDMSGWNPFGEDNFSKLTEEELLDREFDLLRSNRLEERASSDKNVDSLSAPHNHPPEDPFGSVPFISHSGSPEKKAEHSSINQENGTANPIKNGKTSPASKDQRTGKKTSVQGQVQKGNDESESDFESDPPSPKSSEEEEQDDEEVLQGEQGDFNDDDTEPENLGHRPLLMDSEDEEEEEKHSSDSDYEQAKAKYSDMSSVYRDRSGSGPTQDLNTILLTSAQLSSDVAVETPKQEFDVFGAVPFFAVRAQQPQQEKNEKNLPQHRFPAAGLEQEEFDVFTKAPFSKKVNVQECHAVGPEAHTIPGYPKSVDVFGSTPFQPFLTSTSKSESNEDLFGLVPFDEITGSQQQKVKQRSLQKLSSRQRRTKQDMSKSNGKRHHGTPTSTKKTLKPTYRTPERARRHKKVGRRDSQSSNEFLTISDSKENISVALTDGKDRGNVLQPEESLLDPFGAKPFHSPDLSWHPPHQGLSDIRADHNTVLPGRPRQNSLHGSFHSADVLKMDDFGAVPFTELVVQSITPHQSQQSQPVELDPFGAAPFPSKQ</sequence>
<organism>
    <name type="scientific">Homo sapiens</name>
    <name type="common">Human</name>
    <dbReference type="NCBI Taxonomy" id="9606"/>
    <lineage>
        <taxon>Eukaryota</taxon>
        <taxon>Metazoa</taxon>
        <taxon>Chordata</taxon>
        <taxon>Craniata</taxon>
        <taxon>Vertebrata</taxon>
        <taxon>Euteleostomi</taxon>
        <taxon>Mammalia</taxon>
        <taxon>Eutheria</taxon>
        <taxon>Euarchontoglires</taxon>
        <taxon>Primates</taxon>
        <taxon>Haplorrhini</taxon>
        <taxon>Catarrhini</taxon>
        <taxon>Hominidae</taxon>
        <taxon>Homo</taxon>
    </lineage>
</organism>
<name>BMP2K_HUMAN</name>
<accession>Q9NSY1</accession>
<accession>O94791</accession>
<accession>Q4W5H2</accession>
<accession>Q8IYF2</accession>
<accession>Q8N2G7</accession>
<accession>Q8NHG9</accession>
<accession>Q9NTG8</accession>